<comment type="similarity">
    <text evidence="2">Belongs to the transferrin family.</text>
</comment>
<accession>P21376</accession>
<keyword id="KW-0903">Direct protein sequencing</keyword>
<keyword id="KW-1015">Disulfide bond</keyword>
<keyword id="KW-0873">Pyrrolidone carboxylic acid</keyword>
<keyword id="KW-1185">Reference proteome</keyword>
<reference key="1">
    <citation type="journal article" date="1989" name="J. Biochem.">
        <title>Covalent structure of a low-molecular-mass protein, meleagrin, present in a turkey (Meleagris gallopavo) ovomucoid preparation.</title>
        <authorList>
            <person name="Odani S."/>
            <person name="Koide T."/>
            <person name="Ono T."/>
            <person name="Takahashi Y."/>
            <person name="Suzuki J."/>
        </authorList>
    </citation>
    <scope>PROTEIN SEQUENCE</scope>
    <scope>PYROGLUTAMATE FORMATION AT GLN-1</scope>
    <scope>DISULFIDE BONDS</scope>
</reference>
<feature type="peptide" id="PRO_0000045043" description="Meleagrin">
    <location>
        <begin position="1"/>
        <end position="40"/>
    </location>
</feature>
<feature type="modified residue" description="Pyrrolidone carboxylic acid" evidence="1">
    <location>
        <position position="1"/>
    </location>
</feature>
<feature type="disulfide bond" description="Or C-6 with C-32" evidence="1">
    <location>
        <begin position="6"/>
        <end position="33"/>
    </location>
</feature>
<feature type="disulfide bond" evidence="1">
    <location>
        <begin position="12"/>
        <end position="28"/>
    </location>
</feature>
<feature type="disulfide bond" description="Or C-16 with C-33" evidence="1">
    <location>
        <begin position="16"/>
        <end position="32"/>
    </location>
</feature>
<sequence>QVLKYCPKIGYCSSKCSKAEVWAYSPDCKVHCCVPANQKW</sequence>
<proteinExistence type="evidence at protein level"/>
<name>MELG_MELGA</name>
<protein>
    <recommendedName>
        <fullName>Meleagrin</fullName>
    </recommendedName>
</protein>
<evidence type="ECO:0000269" key="1">
    <source>
    </source>
</evidence>
<evidence type="ECO:0000305" key="2"/>
<dbReference type="PIR" id="JX0070">
    <property type="entry name" value="JX0070"/>
</dbReference>
<dbReference type="SMR" id="P21376"/>
<dbReference type="InParanoid" id="P21376"/>
<dbReference type="Proteomes" id="UP000001645">
    <property type="component" value="Unplaced"/>
</dbReference>
<dbReference type="Gene3D" id="3.10.360.10">
    <property type="entry name" value="Antimicrobial Peptide, Beta-defensin 2, Chain A"/>
    <property type="match status" value="1"/>
</dbReference>
<dbReference type="InterPro" id="IPR012573">
    <property type="entry name" value="Meleagrin/Cygnin"/>
</dbReference>
<dbReference type="Pfam" id="PF08189">
    <property type="entry name" value="Meleagrin"/>
    <property type="match status" value="1"/>
</dbReference>
<organism>
    <name type="scientific">Meleagris gallopavo</name>
    <name type="common">Wild turkey</name>
    <dbReference type="NCBI Taxonomy" id="9103"/>
    <lineage>
        <taxon>Eukaryota</taxon>
        <taxon>Metazoa</taxon>
        <taxon>Chordata</taxon>
        <taxon>Craniata</taxon>
        <taxon>Vertebrata</taxon>
        <taxon>Euteleostomi</taxon>
        <taxon>Archelosauria</taxon>
        <taxon>Archosauria</taxon>
        <taxon>Dinosauria</taxon>
        <taxon>Saurischia</taxon>
        <taxon>Theropoda</taxon>
        <taxon>Coelurosauria</taxon>
        <taxon>Aves</taxon>
        <taxon>Neognathae</taxon>
        <taxon>Galloanserae</taxon>
        <taxon>Galliformes</taxon>
        <taxon>Phasianidae</taxon>
        <taxon>Meleagridinae</taxon>
        <taxon>Meleagris</taxon>
    </lineage>
</organism>